<comment type="function">
    <text evidence="1">Catalyzes the condensation of carbamoyl phosphate and aspartate to form carbamoyl aspartate and inorganic phosphate, the committed step in the de novo pyrimidine nucleotide biosynthesis pathway.</text>
</comment>
<comment type="catalytic activity">
    <reaction evidence="1">
        <text>carbamoyl phosphate + L-aspartate = N-carbamoyl-L-aspartate + phosphate + H(+)</text>
        <dbReference type="Rhea" id="RHEA:20013"/>
        <dbReference type="ChEBI" id="CHEBI:15378"/>
        <dbReference type="ChEBI" id="CHEBI:29991"/>
        <dbReference type="ChEBI" id="CHEBI:32814"/>
        <dbReference type="ChEBI" id="CHEBI:43474"/>
        <dbReference type="ChEBI" id="CHEBI:58228"/>
        <dbReference type="EC" id="2.1.3.2"/>
    </reaction>
</comment>
<comment type="pathway">
    <text evidence="1">Pyrimidine metabolism; UMP biosynthesis via de novo pathway; (S)-dihydroorotate from bicarbonate: step 2/3.</text>
</comment>
<comment type="subunit">
    <text evidence="1">Heterododecamer (2C3:3R2) of six catalytic PyrB chains organized as two trimers (C3), and six regulatory PyrI chains organized as three dimers (R2).</text>
</comment>
<comment type="similarity">
    <text evidence="1">Belongs to the aspartate/ornithine carbamoyltransferase superfamily. ATCase family.</text>
</comment>
<name>PYRB_SERP5</name>
<keyword id="KW-0665">Pyrimidine biosynthesis</keyword>
<keyword id="KW-0808">Transferase</keyword>
<protein>
    <recommendedName>
        <fullName evidence="1">Aspartate carbamoyltransferase catalytic subunit</fullName>
        <ecNumber evidence="1">2.1.3.2</ecNumber>
    </recommendedName>
    <alternativeName>
        <fullName evidence="1">Aspartate transcarbamylase</fullName>
        <shortName evidence="1">ATCase</shortName>
    </alternativeName>
</protein>
<reference key="1">
    <citation type="submission" date="2007-09" db="EMBL/GenBank/DDBJ databases">
        <title>Complete sequence of chromosome of Serratia proteamaculans 568.</title>
        <authorList>
            <consortium name="US DOE Joint Genome Institute"/>
            <person name="Copeland A."/>
            <person name="Lucas S."/>
            <person name="Lapidus A."/>
            <person name="Barry K."/>
            <person name="Glavina del Rio T."/>
            <person name="Dalin E."/>
            <person name="Tice H."/>
            <person name="Pitluck S."/>
            <person name="Chain P."/>
            <person name="Malfatti S."/>
            <person name="Shin M."/>
            <person name="Vergez L."/>
            <person name="Schmutz J."/>
            <person name="Larimer F."/>
            <person name="Land M."/>
            <person name="Hauser L."/>
            <person name="Kyrpides N."/>
            <person name="Kim E."/>
            <person name="Taghavi S."/>
            <person name="Newman L."/>
            <person name="Vangronsveld J."/>
            <person name="van der Lelie D."/>
            <person name="Richardson P."/>
        </authorList>
    </citation>
    <scope>NUCLEOTIDE SEQUENCE [LARGE SCALE GENOMIC DNA]</scope>
    <source>
        <strain>568</strain>
    </source>
</reference>
<dbReference type="EC" id="2.1.3.2" evidence="1"/>
<dbReference type="EMBL" id="CP000826">
    <property type="protein sequence ID" value="ABV39651.1"/>
    <property type="molecule type" value="Genomic_DNA"/>
</dbReference>
<dbReference type="SMR" id="A8G961"/>
<dbReference type="STRING" id="399741.Spro_0545"/>
<dbReference type="KEGG" id="spe:Spro_0545"/>
<dbReference type="eggNOG" id="COG0540">
    <property type="taxonomic scope" value="Bacteria"/>
</dbReference>
<dbReference type="HOGENOM" id="CLU_043846_1_2_6"/>
<dbReference type="OrthoDB" id="9774690at2"/>
<dbReference type="UniPathway" id="UPA00070">
    <property type="reaction ID" value="UER00116"/>
</dbReference>
<dbReference type="GO" id="GO:0005829">
    <property type="term" value="C:cytosol"/>
    <property type="evidence" value="ECO:0007669"/>
    <property type="project" value="TreeGrafter"/>
</dbReference>
<dbReference type="GO" id="GO:0016597">
    <property type="term" value="F:amino acid binding"/>
    <property type="evidence" value="ECO:0007669"/>
    <property type="project" value="InterPro"/>
</dbReference>
<dbReference type="GO" id="GO:0004070">
    <property type="term" value="F:aspartate carbamoyltransferase activity"/>
    <property type="evidence" value="ECO:0007669"/>
    <property type="project" value="UniProtKB-UniRule"/>
</dbReference>
<dbReference type="GO" id="GO:0006207">
    <property type="term" value="P:'de novo' pyrimidine nucleobase biosynthetic process"/>
    <property type="evidence" value="ECO:0007669"/>
    <property type="project" value="InterPro"/>
</dbReference>
<dbReference type="GO" id="GO:0044205">
    <property type="term" value="P:'de novo' UMP biosynthetic process"/>
    <property type="evidence" value="ECO:0007669"/>
    <property type="project" value="UniProtKB-UniRule"/>
</dbReference>
<dbReference type="GO" id="GO:0006520">
    <property type="term" value="P:amino acid metabolic process"/>
    <property type="evidence" value="ECO:0007669"/>
    <property type="project" value="InterPro"/>
</dbReference>
<dbReference type="FunFam" id="3.40.50.1370:FF:000001">
    <property type="entry name" value="Aspartate carbamoyltransferase"/>
    <property type="match status" value="1"/>
</dbReference>
<dbReference type="FunFam" id="3.40.50.1370:FF:000002">
    <property type="entry name" value="Aspartate carbamoyltransferase 2"/>
    <property type="match status" value="1"/>
</dbReference>
<dbReference type="Gene3D" id="3.40.50.1370">
    <property type="entry name" value="Aspartate/ornithine carbamoyltransferase"/>
    <property type="match status" value="2"/>
</dbReference>
<dbReference type="HAMAP" id="MF_00001">
    <property type="entry name" value="Asp_carb_tr"/>
    <property type="match status" value="1"/>
</dbReference>
<dbReference type="InterPro" id="IPR006132">
    <property type="entry name" value="Asp/Orn_carbamoyltranf_P-bd"/>
</dbReference>
<dbReference type="InterPro" id="IPR006130">
    <property type="entry name" value="Asp/Orn_carbamoylTrfase"/>
</dbReference>
<dbReference type="InterPro" id="IPR036901">
    <property type="entry name" value="Asp/Orn_carbamoylTrfase_sf"/>
</dbReference>
<dbReference type="InterPro" id="IPR002082">
    <property type="entry name" value="Asp_carbamoyltransf"/>
</dbReference>
<dbReference type="InterPro" id="IPR006131">
    <property type="entry name" value="Asp_carbamoyltransf_Asp/Orn-bd"/>
</dbReference>
<dbReference type="NCBIfam" id="TIGR00670">
    <property type="entry name" value="asp_carb_tr"/>
    <property type="match status" value="1"/>
</dbReference>
<dbReference type="NCBIfam" id="NF002032">
    <property type="entry name" value="PRK00856.1"/>
    <property type="match status" value="1"/>
</dbReference>
<dbReference type="PANTHER" id="PTHR45753:SF6">
    <property type="entry name" value="ASPARTATE CARBAMOYLTRANSFERASE"/>
    <property type="match status" value="1"/>
</dbReference>
<dbReference type="PANTHER" id="PTHR45753">
    <property type="entry name" value="ORNITHINE CARBAMOYLTRANSFERASE, MITOCHONDRIAL"/>
    <property type="match status" value="1"/>
</dbReference>
<dbReference type="Pfam" id="PF00185">
    <property type="entry name" value="OTCace"/>
    <property type="match status" value="1"/>
</dbReference>
<dbReference type="Pfam" id="PF02729">
    <property type="entry name" value="OTCace_N"/>
    <property type="match status" value="1"/>
</dbReference>
<dbReference type="PRINTS" id="PR00100">
    <property type="entry name" value="AOTCASE"/>
</dbReference>
<dbReference type="PRINTS" id="PR00101">
    <property type="entry name" value="ATCASE"/>
</dbReference>
<dbReference type="SUPFAM" id="SSF53671">
    <property type="entry name" value="Aspartate/ornithine carbamoyltransferase"/>
    <property type="match status" value="1"/>
</dbReference>
<dbReference type="PROSITE" id="PS00097">
    <property type="entry name" value="CARBAMOYLTRANSFERASE"/>
    <property type="match status" value="1"/>
</dbReference>
<gene>
    <name evidence="1" type="primary">pyrB</name>
    <name type="ordered locus">Spro_0545</name>
</gene>
<feature type="chain" id="PRO_0000329117" description="Aspartate carbamoyltransferase catalytic subunit">
    <location>
        <begin position="1"/>
        <end position="311"/>
    </location>
</feature>
<feature type="binding site" evidence="1">
    <location>
        <position position="55"/>
    </location>
    <ligand>
        <name>carbamoyl phosphate</name>
        <dbReference type="ChEBI" id="CHEBI:58228"/>
    </ligand>
</feature>
<feature type="binding site" evidence="1">
    <location>
        <position position="56"/>
    </location>
    <ligand>
        <name>carbamoyl phosphate</name>
        <dbReference type="ChEBI" id="CHEBI:58228"/>
    </ligand>
</feature>
<feature type="binding site" evidence="1">
    <location>
        <position position="85"/>
    </location>
    <ligand>
        <name>L-aspartate</name>
        <dbReference type="ChEBI" id="CHEBI:29991"/>
    </ligand>
</feature>
<feature type="binding site" evidence="1">
    <location>
        <position position="106"/>
    </location>
    <ligand>
        <name>carbamoyl phosphate</name>
        <dbReference type="ChEBI" id="CHEBI:58228"/>
    </ligand>
</feature>
<feature type="binding site" evidence="1">
    <location>
        <position position="135"/>
    </location>
    <ligand>
        <name>carbamoyl phosphate</name>
        <dbReference type="ChEBI" id="CHEBI:58228"/>
    </ligand>
</feature>
<feature type="binding site" evidence="1">
    <location>
        <position position="138"/>
    </location>
    <ligand>
        <name>carbamoyl phosphate</name>
        <dbReference type="ChEBI" id="CHEBI:58228"/>
    </ligand>
</feature>
<feature type="binding site" evidence="1">
    <location>
        <position position="168"/>
    </location>
    <ligand>
        <name>L-aspartate</name>
        <dbReference type="ChEBI" id="CHEBI:29991"/>
    </ligand>
</feature>
<feature type="binding site" evidence="1">
    <location>
        <position position="230"/>
    </location>
    <ligand>
        <name>L-aspartate</name>
        <dbReference type="ChEBI" id="CHEBI:29991"/>
    </ligand>
</feature>
<feature type="binding site" evidence="1">
    <location>
        <position position="268"/>
    </location>
    <ligand>
        <name>carbamoyl phosphate</name>
        <dbReference type="ChEBI" id="CHEBI:58228"/>
    </ligand>
</feature>
<feature type="binding site" evidence="1">
    <location>
        <position position="269"/>
    </location>
    <ligand>
        <name>carbamoyl phosphate</name>
        <dbReference type="ChEBI" id="CHEBI:58228"/>
    </ligand>
</feature>
<organism>
    <name type="scientific">Serratia proteamaculans (strain 568)</name>
    <dbReference type="NCBI Taxonomy" id="399741"/>
    <lineage>
        <taxon>Bacteria</taxon>
        <taxon>Pseudomonadati</taxon>
        <taxon>Pseudomonadota</taxon>
        <taxon>Gammaproteobacteria</taxon>
        <taxon>Enterobacterales</taxon>
        <taxon>Yersiniaceae</taxon>
        <taxon>Serratia</taxon>
    </lineage>
</organism>
<accession>A8G961</accession>
<sequence>MANPLYHKHIISINDLSREDLELVLRTAASLKANPQPELLKHKVIASCFFEASTRTRLSFETSMHRLGASVVGFADGSNTSLGKKGETLADTISVIGTYVDAIVMRHPQEGAARLATEFSGGIPVLNAGDGANQHPTQTLLDLFTIQETQGRLNNINIAMVGDLKYGRTVHSLAQALAKFEGNRFFFIAPDALAMPAYILQMLEEKGIQYSLHSSIEEVVPELDILYMTRVQKERLDPSEYANVKAQFVLRAADLAGARDNLKVLHPLPRIDEITTDVDKTPYAYYFQQAGNGIFARQALLALVLNADLAL</sequence>
<proteinExistence type="inferred from homology"/>
<evidence type="ECO:0000255" key="1">
    <source>
        <dbReference type="HAMAP-Rule" id="MF_00001"/>
    </source>
</evidence>